<sequence>MSNPKQEQHLSQDLLRIITATHHDPFEVLGRHSLPVPTATADTLVRVYLPGARSAELVINRQNRQIAPLNRLPGTDFFEWYGLGQQLPVHYQIEWYDRHNQHRVHYDPYAFAPQLGELDMHLFAEGQHWNIYNLLGAHPRQVDGINGVLFATWAPNAERISVVGNFNDWDGRHHPMRVRGSSGLWELFIPGVQPGDLYKFEIRNRQTGAVFLKSDPYGQSFEHRPSTSSIITADSAFAWQDADWMEHRAHWDWQASPLSIYEVHLGSWRRGWAGEFLSYRELAHQLADYVKYMGFTHVEILPVSEHPLDDSWGYQTTGYYAPTSRFGSPDDFRYFVDHLHQQGIGIILDWVPAHFPKDAHALARFDGSALYEHEDPRLGEHRDWGTLIYNYGRSEVRNFLLANALFWLKEYHIDGLRVDAVASMLHLDYSRQPGEWIPNIHGGNENLEAMTFLQQLNAICHGQHSGALVIAEESTAWPQVTRPTWVGGLGFSMKWNMGWMHDTLEYMSREPVHRQYHHNQLTFGMMYAFTENFQLPFSHDEVVHGKGSMINKMPGDDWQKFANLRLLYTYLYTYPGSKLLFMGGEFAQWSEWAHGRSLDWHLLDYGPHQGVQSAVKDLNHLYRQVPSLYQRNFRGDGFEWIDCHDSTQSIISYIRSSDSEFTLVILNFTPVPRYNYRIGVPVAGQYQEVFNSDSQFYGGSNLGNANPLYTQPVPWMNHGQSLEVTLPPLGGLLLKLA</sequence>
<gene>
    <name evidence="1" type="primary">glgB</name>
    <name type="ordered locus">CJA_1885</name>
</gene>
<accession>B3PGN4</accession>
<proteinExistence type="inferred from homology"/>
<evidence type="ECO:0000255" key="1">
    <source>
        <dbReference type="HAMAP-Rule" id="MF_00685"/>
    </source>
</evidence>
<name>GLGB_CELJU</name>
<organism>
    <name type="scientific">Cellvibrio japonicus (strain Ueda107)</name>
    <name type="common">Pseudomonas fluorescens subsp. cellulosa</name>
    <dbReference type="NCBI Taxonomy" id="498211"/>
    <lineage>
        <taxon>Bacteria</taxon>
        <taxon>Pseudomonadati</taxon>
        <taxon>Pseudomonadota</taxon>
        <taxon>Gammaproteobacteria</taxon>
        <taxon>Cellvibrionales</taxon>
        <taxon>Cellvibrionaceae</taxon>
        <taxon>Cellvibrio</taxon>
    </lineage>
</organism>
<feature type="chain" id="PRO_1000131812" description="1,4-alpha-glucan branching enzyme GlgB">
    <location>
        <begin position="1"/>
        <end position="737"/>
    </location>
</feature>
<feature type="active site" description="Nucleophile" evidence="1">
    <location>
        <position position="419"/>
    </location>
</feature>
<feature type="active site" description="Proton donor" evidence="1">
    <location>
        <position position="472"/>
    </location>
</feature>
<reference key="1">
    <citation type="journal article" date="2008" name="J. Bacteriol.">
        <title>Insights into plant cell wall degradation from the genome sequence of the soil bacterium Cellvibrio japonicus.</title>
        <authorList>
            <person name="DeBoy R.T."/>
            <person name="Mongodin E.F."/>
            <person name="Fouts D.E."/>
            <person name="Tailford L.E."/>
            <person name="Khouri H."/>
            <person name="Emerson J.B."/>
            <person name="Mohamoud Y."/>
            <person name="Watkins K."/>
            <person name="Henrissat B."/>
            <person name="Gilbert H.J."/>
            <person name="Nelson K.E."/>
        </authorList>
    </citation>
    <scope>NUCLEOTIDE SEQUENCE [LARGE SCALE GENOMIC DNA]</scope>
    <source>
        <strain>Ueda107</strain>
    </source>
</reference>
<comment type="function">
    <text evidence="1">Catalyzes the formation of the alpha-1,6-glucosidic linkages in glycogen by scission of a 1,4-alpha-linked oligosaccharide from growing alpha-1,4-glucan chains and the subsequent attachment of the oligosaccharide to the alpha-1,6 position.</text>
</comment>
<comment type="catalytic activity">
    <reaction evidence="1">
        <text>Transfers a segment of a (1-&gt;4)-alpha-D-glucan chain to a primary hydroxy group in a similar glucan chain.</text>
        <dbReference type="EC" id="2.4.1.18"/>
    </reaction>
</comment>
<comment type="pathway">
    <text evidence="1">Glycan biosynthesis; glycogen biosynthesis.</text>
</comment>
<comment type="subunit">
    <text evidence="1">Monomer.</text>
</comment>
<comment type="similarity">
    <text evidence="1">Belongs to the glycosyl hydrolase 13 family. GlgB subfamily.</text>
</comment>
<protein>
    <recommendedName>
        <fullName evidence="1">1,4-alpha-glucan branching enzyme GlgB</fullName>
        <ecNumber evidence="1">2.4.1.18</ecNumber>
    </recommendedName>
    <alternativeName>
        <fullName evidence="1">1,4-alpha-D-glucan:1,4-alpha-D-glucan 6-glucosyl-transferase</fullName>
    </alternativeName>
    <alternativeName>
        <fullName evidence="1">Alpha-(1-&gt;4)-glucan branching enzyme</fullName>
    </alternativeName>
    <alternativeName>
        <fullName evidence="1">Glycogen branching enzyme</fullName>
        <shortName evidence="1">BE</shortName>
    </alternativeName>
</protein>
<dbReference type="EC" id="2.4.1.18" evidence="1"/>
<dbReference type="EMBL" id="CP000934">
    <property type="protein sequence ID" value="ACE85398.1"/>
    <property type="molecule type" value="Genomic_DNA"/>
</dbReference>
<dbReference type="RefSeq" id="WP_012487502.1">
    <property type="nucleotide sequence ID" value="NC_010995.1"/>
</dbReference>
<dbReference type="SMR" id="B3PGN4"/>
<dbReference type="STRING" id="498211.CJA_1885"/>
<dbReference type="CAZy" id="CBM48">
    <property type="family name" value="Carbohydrate-Binding Module Family 48"/>
</dbReference>
<dbReference type="CAZy" id="GH13">
    <property type="family name" value="Glycoside Hydrolase Family 13"/>
</dbReference>
<dbReference type="KEGG" id="cja:CJA_1885"/>
<dbReference type="eggNOG" id="COG0296">
    <property type="taxonomic scope" value="Bacteria"/>
</dbReference>
<dbReference type="HOGENOM" id="CLU_004245_3_2_6"/>
<dbReference type="OrthoDB" id="9800174at2"/>
<dbReference type="UniPathway" id="UPA00164"/>
<dbReference type="Proteomes" id="UP000001036">
    <property type="component" value="Chromosome"/>
</dbReference>
<dbReference type="GO" id="GO:0005829">
    <property type="term" value="C:cytosol"/>
    <property type="evidence" value="ECO:0007669"/>
    <property type="project" value="TreeGrafter"/>
</dbReference>
<dbReference type="GO" id="GO:0003844">
    <property type="term" value="F:1,4-alpha-glucan branching enzyme activity"/>
    <property type="evidence" value="ECO:0007669"/>
    <property type="project" value="UniProtKB-UniRule"/>
</dbReference>
<dbReference type="GO" id="GO:0043169">
    <property type="term" value="F:cation binding"/>
    <property type="evidence" value="ECO:0007669"/>
    <property type="project" value="InterPro"/>
</dbReference>
<dbReference type="GO" id="GO:0004553">
    <property type="term" value="F:hydrolase activity, hydrolyzing O-glycosyl compounds"/>
    <property type="evidence" value="ECO:0007669"/>
    <property type="project" value="InterPro"/>
</dbReference>
<dbReference type="GO" id="GO:0005978">
    <property type="term" value="P:glycogen biosynthetic process"/>
    <property type="evidence" value="ECO:0007669"/>
    <property type="project" value="UniProtKB-UniRule"/>
</dbReference>
<dbReference type="CDD" id="cd11322">
    <property type="entry name" value="AmyAc_Glg_BE"/>
    <property type="match status" value="1"/>
</dbReference>
<dbReference type="CDD" id="cd02855">
    <property type="entry name" value="E_set_GBE_prok_N"/>
    <property type="match status" value="1"/>
</dbReference>
<dbReference type="FunFam" id="2.60.40.10:FF:000169">
    <property type="entry name" value="1,4-alpha-glucan branching enzyme GlgB"/>
    <property type="match status" value="1"/>
</dbReference>
<dbReference type="FunFam" id="2.60.40.1180:FF:000002">
    <property type="entry name" value="1,4-alpha-glucan branching enzyme GlgB"/>
    <property type="match status" value="1"/>
</dbReference>
<dbReference type="FunFam" id="3.20.20.80:FF:000003">
    <property type="entry name" value="1,4-alpha-glucan branching enzyme GlgB"/>
    <property type="match status" value="1"/>
</dbReference>
<dbReference type="Gene3D" id="3.20.20.80">
    <property type="entry name" value="Glycosidases"/>
    <property type="match status" value="1"/>
</dbReference>
<dbReference type="Gene3D" id="2.60.40.1180">
    <property type="entry name" value="Golgi alpha-mannosidase II"/>
    <property type="match status" value="1"/>
</dbReference>
<dbReference type="Gene3D" id="2.60.40.10">
    <property type="entry name" value="Immunoglobulins"/>
    <property type="match status" value="2"/>
</dbReference>
<dbReference type="HAMAP" id="MF_00685">
    <property type="entry name" value="GlgB"/>
    <property type="match status" value="1"/>
</dbReference>
<dbReference type="InterPro" id="IPR006048">
    <property type="entry name" value="A-amylase/branching_C"/>
</dbReference>
<dbReference type="InterPro" id="IPR037439">
    <property type="entry name" value="Branching_enzy"/>
</dbReference>
<dbReference type="InterPro" id="IPR006407">
    <property type="entry name" value="GlgB"/>
</dbReference>
<dbReference type="InterPro" id="IPR054169">
    <property type="entry name" value="GlgB_N"/>
</dbReference>
<dbReference type="InterPro" id="IPR044143">
    <property type="entry name" value="GlgB_N_E_set_prok"/>
</dbReference>
<dbReference type="InterPro" id="IPR006047">
    <property type="entry name" value="Glyco_hydro_13_cat_dom"/>
</dbReference>
<dbReference type="InterPro" id="IPR004193">
    <property type="entry name" value="Glyco_hydro_13_N"/>
</dbReference>
<dbReference type="InterPro" id="IPR013780">
    <property type="entry name" value="Glyco_hydro_b"/>
</dbReference>
<dbReference type="InterPro" id="IPR017853">
    <property type="entry name" value="Glycoside_hydrolase_SF"/>
</dbReference>
<dbReference type="InterPro" id="IPR013783">
    <property type="entry name" value="Ig-like_fold"/>
</dbReference>
<dbReference type="InterPro" id="IPR014756">
    <property type="entry name" value="Ig_E-set"/>
</dbReference>
<dbReference type="NCBIfam" id="TIGR01515">
    <property type="entry name" value="branching_enzym"/>
    <property type="match status" value="1"/>
</dbReference>
<dbReference type="NCBIfam" id="NF003811">
    <property type="entry name" value="PRK05402.1"/>
    <property type="match status" value="1"/>
</dbReference>
<dbReference type="NCBIfam" id="NF008967">
    <property type="entry name" value="PRK12313.1"/>
    <property type="match status" value="1"/>
</dbReference>
<dbReference type="PANTHER" id="PTHR43651">
    <property type="entry name" value="1,4-ALPHA-GLUCAN-BRANCHING ENZYME"/>
    <property type="match status" value="1"/>
</dbReference>
<dbReference type="PANTHER" id="PTHR43651:SF3">
    <property type="entry name" value="1,4-ALPHA-GLUCAN-BRANCHING ENZYME"/>
    <property type="match status" value="1"/>
</dbReference>
<dbReference type="Pfam" id="PF00128">
    <property type="entry name" value="Alpha-amylase"/>
    <property type="match status" value="2"/>
</dbReference>
<dbReference type="Pfam" id="PF02806">
    <property type="entry name" value="Alpha-amylase_C"/>
    <property type="match status" value="1"/>
</dbReference>
<dbReference type="Pfam" id="PF02922">
    <property type="entry name" value="CBM_48"/>
    <property type="match status" value="1"/>
</dbReference>
<dbReference type="Pfam" id="PF22019">
    <property type="entry name" value="GlgB_N"/>
    <property type="match status" value="1"/>
</dbReference>
<dbReference type="PIRSF" id="PIRSF000463">
    <property type="entry name" value="GlgB"/>
    <property type="match status" value="1"/>
</dbReference>
<dbReference type="SMART" id="SM00642">
    <property type="entry name" value="Aamy"/>
    <property type="match status" value="1"/>
</dbReference>
<dbReference type="SUPFAM" id="SSF51445">
    <property type="entry name" value="(Trans)glycosidases"/>
    <property type="match status" value="1"/>
</dbReference>
<dbReference type="SUPFAM" id="SSF81296">
    <property type="entry name" value="E set domains"/>
    <property type="match status" value="2"/>
</dbReference>
<dbReference type="SUPFAM" id="SSF51011">
    <property type="entry name" value="Glycosyl hydrolase domain"/>
    <property type="match status" value="1"/>
</dbReference>
<keyword id="KW-0119">Carbohydrate metabolism</keyword>
<keyword id="KW-0320">Glycogen biosynthesis</keyword>
<keyword id="KW-0321">Glycogen metabolism</keyword>
<keyword id="KW-0328">Glycosyltransferase</keyword>
<keyword id="KW-1185">Reference proteome</keyword>
<keyword id="KW-0808">Transferase</keyword>